<proteinExistence type="inferred from homology"/>
<dbReference type="EMBL" id="AM774415">
    <property type="protein sequence ID" value="CAP13051.1"/>
    <property type="molecule type" value="Genomic_DNA"/>
</dbReference>
<dbReference type="RefSeq" id="WP_010902087.1">
    <property type="nucleotide sequence ID" value="NC_010364.1"/>
</dbReference>
<dbReference type="SMR" id="B0R2U1"/>
<dbReference type="EnsemblBacteria" id="CAP13051">
    <property type="protein sequence ID" value="CAP13051"/>
    <property type="gene ID" value="OE_1294R"/>
</dbReference>
<dbReference type="KEGG" id="hsl:OE_1294R"/>
<dbReference type="HOGENOM" id="CLU_080796_1_0_2"/>
<dbReference type="PhylomeDB" id="B0R2U1"/>
<dbReference type="Proteomes" id="UP000001321">
    <property type="component" value="Chromosome"/>
</dbReference>
<dbReference type="GO" id="GO:0022625">
    <property type="term" value="C:cytosolic large ribosomal subunit"/>
    <property type="evidence" value="ECO:0007669"/>
    <property type="project" value="TreeGrafter"/>
</dbReference>
<dbReference type="GO" id="GO:0003723">
    <property type="term" value="F:RNA binding"/>
    <property type="evidence" value="ECO:0007669"/>
    <property type="project" value="TreeGrafter"/>
</dbReference>
<dbReference type="GO" id="GO:0003735">
    <property type="term" value="F:structural constituent of ribosome"/>
    <property type="evidence" value="ECO:0007669"/>
    <property type="project" value="InterPro"/>
</dbReference>
<dbReference type="GO" id="GO:0002181">
    <property type="term" value="P:cytoplasmic translation"/>
    <property type="evidence" value="ECO:0007669"/>
    <property type="project" value="TreeGrafter"/>
</dbReference>
<dbReference type="FunFam" id="3.40.1120.10:FF:000002">
    <property type="entry name" value="50S ribosomal protein L15e"/>
    <property type="match status" value="1"/>
</dbReference>
<dbReference type="Gene3D" id="3.40.1120.10">
    <property type="entry name" value="Ribosomal protein l15e"/>
    <property type="match status" value="1"/>
</dbReference>
<dbReference type="HAMAP" id="MF_00256">
    <property type="entry name" value="Ribosomal_eL15"/>
    <property type="match status" value="1"/>
</dbReference>
<dbReference type="InterPro" id="IPR024794">
    <property type="entry name" value="Rbsml_eL15_core_dom_sf"/>
</dbReference>
<dbReference type="InterPro" id="IPR000439">
    <property type="entry name" value="Ribosomal_eL15"/>
</dbReference>
<dbReference type="InterPro" id="IPR020926">
    <property type="entry name" value="Ribosomal_eL15_arc"/>
</dbReference>
<dbReference type="InterPro" id="IPR020925">
    <property type="entry name" value="Ribosomal_eL15_CS"/>
</dbReference>
<dbReference type="InterPro" id="IPR012678">
    <property type="entry name" value="Ribosomal_uL23/eL15/eS24_sf"/>
</dbReference>
<dbReference type="NCBIfam" id="NF003269">
    <property type="entry name" value="PRK04243.1"/>
    <property type="match status" value="1"/>
</dbReference>
<dbReference type="PANTHER" id="PTHR11847:SF4">
    <property type="entry name" value="LARGE RIBOSOMAL SUBUNIT PROTEIN EL15"/>
    <property type="match status" value="1"/>
</dbReference>
<dbReference type="PANTHER" id="PTHR11847">
    <property type="entry name" value="RIBOSOMAL PROTEIN L15"/>
    <property type="match status" value="1"/>
</dbReference>
<dbReference type="Pfam" id="PF00827">
    <property type="entry name" value="Ribosomal_L15e"/>
    <property type="match status" value="1"/>
</dbReference>
<dbReference type="SMART" id="SM01384">
    <property type="entry name" value="Ribosomal_L15e"/>
    <property type="match status" value="1"/>
</dbReference>
<dbReference type="SUPFAM" id="SSF54189">
    <property type="entry name" value="Ribosomal proteins S24e, L23 and L15e"/>
    <property type="match status" value="1"/>
</dbReference>
<dbReference type="PROSITE" id="PS01194">
    <property type="entry name" value="RIBOSOMAL_L15E"/>
    <property type="match status" value="1"/>
</dbReference>
<keyword id="KW-0687">Ribonucleoprotein</keyword>
<keyword id="KW-0689">Ribosomal protein</keyword>
<name>RL15E_HALS3</name>
<comment type="similarity">
    <text evidence="1">Belongs to the eukaryotic ribosomal protein eL15 family.</text>
</comment>
<organism>
    <name type="scientific">Halobacterium salinarum (strain ATCC 29341 / DSM 671 / R1)</name>
    <dbReference type="NCBI Taxonomy" id="478009"/>
    <lineage>
        <taxon>Archaea</taxon>
        <taxon>Methanobacteriati</taxon>
        <taxon>Methanobacteriota</taxon>
        <taxon>Stenosarchaea group</taxon>
        <taxon>Halobacteria</taxon>
        <taxon>Halobacteriales</taxon>
        <taxon>Halobacteriaceae</taxon>
        <taxon>Halobacterium</taxon>
        <taxon>Halobacterium salinarum NRC-34001</taxon>
    </lineage>
</organism>
<feature type="chain" id="PRO_1000114026" description="Large ribosomal subunit protein eL15">
    <location>
        <begin position="1"/>
        <end position="196"/>
    </location>
</feature>
<feature type="region of interest" description="Disordered" evidence="2">
    <location>
        <begin position="162"/>
        <end position="196"/>
    </location>
</feature>
<feature type="compositionally biased region" description="Basic residues" evidence="2">
    <location>
        <begin position="162"/>
        <end position="172"/>
    </location>
</feature>
<protein>
    <recommendedName>
        <fullName evidence="1">Large ribosomal subunit protein eL15</fullName>
    </recommendedName>
    <alternativeName>
        <fullName evidence="3">50S ribosomal protein L15e</fullName>
    </alternativeName>
</protein>
<sequence>MARSFYSHIKEAWEDPDDGKLAELQWQRKQDWRKEGAIERVDRPTRLDKARELGYKAKQGVVVVRVSVRKGTARKSRFKAGRRTKRQGVNRIGRAKNLQRIAEERASRKYVNLRTLNSYWVGEDGSQKWFEAILLDPEHGAIQNDDDLNWICDDSHKNRVFRGKTSAGRRARGLQNRGKGTEGLRPSTNADKRNKS</sequence>
<accession>B0R2U1</accession>
<reference key="1">
    <citation type="journal article" date="2008" name="Genomics">
        <title>Evolution in the laboratory: the genome of Halobacterium salinarum strain R1 compared to that of strain NRC-1.</title>
        <authorList>
            <person name="Pfeiffer F."/>
            <person name="Schuster S.C."/>
            <person name="Broicher A."/>
            <person name="Falb M."/>
            <person name="Palm P."/>
            <person name="Rodewald K."/>
            <person name="Ruepp A."/>
            <person name="Soppa J."/>
            <person name="Tittor J."/>
            <person name="Oesterhelt D."/>
        </authorList>
    </citation>
    <scope>NUCLEOTIDE SEQUENCE [LARGE SCALE GENOMIC DNA]</scope>
    <source>
        <strain>ATCC 29341 / DSM 671 / R1</strain>
    </source>
</reference>
<evidence type="ECO:0000255" key="1">
    <source>
        <dbReference type="HAMAP-Rule" id="MF_00256"/>
    </source>
</evidence>
<evidence type="ECO:0000256" key="2">
    <source>
        <dbReference type="SAM" id="MobiDB-lite"/>
    </source>
</evidence>
<evidence type="ECO:0000305" key="3"/>
<gene>
    <name evidence="1" type="primary">rpl15e</name>
    <name type="ordered locus">OE_1294R</name>
</gene>